<evidence type="ECO:0000250" key="1"/>
<evidence type="ECO:0000305" key="2"/>
<gene>
    <name type="primary">pheS</name>
    <name type="ordered locus">CPn_0993</name>
    <name type="ordered locus">CP_0862</name>
    <name type="ordered locus">CpB1031</name>
</gene>
<protein>
    <recommendedName>
        <fullName>Phenylalanine--tRNA ligase alpha subunit</fullName>
        <ecNumber>6.1.1.20</ecNumber>
    </recommendedName>
    <alternativeName>
        <fullName>Phenylalanyl-tRNA synthetase alpha subunit</fullName>
        <shortName>PheRS</shortName>
    </alternativeName>
</protein>
<reference key="1">
    <citation type="journal article" date="1999" name="Nat. Genet.">
        <title>Comparative genomes of Chlamydia pneumoniae and C. trachomatis.</title>
        <authorList>
            <person name="Kalman S."/>
            <person name="Mitchell W.P."/>
            <person name="Marathe R."/>
            <person name="Lammel C.J."/>
            <person name="Fan J."/>
            <person name="Hyman R.W."/>
            <person name="Olinger L."/>
            <person name="Grimwood J."/>
            <person name="Davis R.W."/>
            <person name="Stephens R.S."/>
        </authorList>
    </citation>
    <scope>NUCLEOTIDE SEQUENCE [LARGE SCALE GENOMIC DNA]</scope>
    <source>
        <strain>CWL029</strain>
    </source>
</reference>
<reference key="2">
    <citation type="journal article" date="2000" name="Nucleic Acids Res.">
        <title>Genome sequences of Chlamydia trachomatis MoPn and Chlamydia pneumoniae AR39.</title>
        <authorList>
            <person name="Read T.D."/>
            <person name="Brunham R.C."/>
            <person name="Shen C."/>
            <person name="Gill S.R."/>
            <person name="Heidelberg J.F."/>
            <person name="White O."/>
            <person name="Hickey E.K."/>
            <person name="Peterson J.D."/>
            <person name="Utterback T.R."/>
            <person name="Berry K.J."/>
            <person name="Bass S."/>
            <person name="Linher K.D."/>
            <person name="Weidman J.F."/>
            <person name="Khouri H.M."/>
            <person name="Craven B."/>
            <person name="Bowman C."/>
            <person name="Dodson R.J."/>
            <person name="Gwinn M.L."/>
            <person name="Nelson W.C."/>
            <person name="DeBoy R.T."/>
            <person name="Kolonay J.F."/>
            <person name="McClarty G."/>
            <person name="Salzberg S.L."/>
            <person name="Eisen J.A."/>
            <person name="Fraser C.M."/>
        </authorList>
    </citation>
    <scope>NUCLEOTIDE SEQUENCE [LARGE SCALE GENOMIC DNA]</scope>
    <source>
        <strain>AR39</strain>
    </source>
</reference>
<reference key="3">
    <citation type="journal article" date="2000" name="Nucleic Acids Res.">
        <title>Comparison of whole genome sequences of Chlamydia pneumoniae J138 from Japan and CWL029 from USA.</title>
        <authorList>
            <person name="Shirai M."/>
            <person name="Hirakawa H."/>
            <person name="Kimoto M."/>
            <person name="Tabuchi M."/>
            <person name="Kishi F."/>
            <person name="Ouchi K."/>
            <person name="Shiba T."/>
            <person name="Ishii K."/>
            <person name="Hattori M."/>
            <person name="Kuhara S."/>
            <person name="Nakazawa T."/>
        </authorList>
    </citation>
    <scope>NUCLEOTIDE SEQUENCE [LARGE SCALE GENOMIC DNA]</scope>
    <source>
        <strain>J138</strain>
    </source>
</reference>
<reference key="4">
    <citation type="submission" date="2002-05" db="EMBL/GenBank/DDBJ databases">
        <title>The genome sequence of Chlamydia pneumoniae TW183 and comparison with other Chlamydia strains based on whole genome sequence analysis.</title>
        <authorList>
            <person name="Geng M.M."/>
            <person name="Schuhmacher A."/>
            <person name="Muehldorfer I."/>
            <person name="Bensch K.W."/>
            <person name="Schaefer K.P."/>
            <person name="Schneider S."/>
            <person name="Pohl T."/>
            <person name="Essig A."/>
            <person name="Marre R."/>
            <person name="Melchers K."/>
        </authorList>
    </citation>
    <scope>NUCLEOTIDE SEQUENCE [LARGE SCALE GENOMIC DNA]</scope>
    <source>
        <strain>TW-183</strain>
    </source>
</reference>
<feature type="chain" id="PRO_0000126687" description="Phenylalanine--tRNA ligase alpha subunit">
    <location>
        <begin position="1"/>
        <end position="339"/>
    </location>
</feature>
<feature type="binding site" evidence="1">
    <location>
        <position position="254"/>
    </location>
    <ligand>
        <name>Mg(2+)</name>
        <dbReference type="ChEBI" id="CHEBI:18420"/>
        <note>shared with beta subunit</note>
    </ligand>
</feature>
<dbReference type="EC" id="6.1.1.20"/>
<dbReference type="EMBL" id="AE001363">
    <property type="protein sequence ID" value="AAD19130.1"/>
    <property type="molecule type" value="Genomic_DNA"/>
</dbReference>
<dbReference type="EMBL" id="AE002161">
    <property type="protein sequence ID" value="AAF38651.1"/>
    <property type="molecule type" value="Genomic_DNA"/>
</dbReference>
<dbReference type="EMBL" id="BA000008">
    <property type="protein sequence ID" value="BAA99200.1"/>
    <property type="molecule type" value="Genomic_DNA"/>
</dbReference>
<dbReference type="EMBL" id="AE009440">
    <property type="protein sequence ID" value="AAP98960.1"/>
    <property type="molecule type" value="Genomic_DNA"/>
</dbReference>
<dbReference type="PIR" id="B72011">
    <property type="entry name" value="B72011"/>
</dbReference>
<dbReference type="PIR" id="F86614">
    <property type="entry name" value="F86614"/>
</dbReference>
<dbReference type="RefSeq" id="NP_225187.1">
    <property type="nucleotide sequence ID" value="NC_000922.1"/>
</dbReference>
<dbReference type="RefSeq" id="WP_010883626.1">
    <property type="nucleotide sequence ID" value="NZ_LN847257.1"/>
</dbReference>
<dbReference type="SMR" id="Q9Z6R6"/>
<dbReference type="STRING" id="406984.CPK_ORF00418"/>
<dbReference type="GeneID" id="45051049"/>
<dbReference type="KEGG" id="cpa:CP_0862"/>
<dbReference type="KEGG" id="cpj:pheS"/>
<dbReference type="KEGG" id="cpn:CPn_0993"/>
<dbReference type="KEGG" id="cpt:CpB1031"/>
<dbReference type="PATRIC" id="fig|115713.3.peg.1088"/>
<dbReference type="eggNOG" id="COG0016">
    <property type="taxonomic scope" value="Bacteria"/>
</dbReference>
<dbReference type="HOGENOM" id="CLU_025086_0_1_0"/>
<dbReference type="OrthoDB" id="9800719at2"/>
<dbReference type="Proteomes" id="UP000000583">
    <property type="component" value="Chromosome"/>
</dbReference>
<dbReference type="Proteomes" id="UP000000801">
    <property type="component" value="Chromosome"/>
</dbReference>
<dbReference type="GO" id="GO:0005737">
    <property type="term" value="C:cytoplasm"/>
    <property type="evidence" value="ECO:0007669"/>
    <property type="project" value="UniProtKB-SubCell"/>
</dbReference>
<dbReference type="GO" id="GO:0005524">
    <property type="term" value="F:ATP binding"/>
    <property type="evidence" value="ECO:0007669"/>
    <property type="project" value="UniProtKB-UniRule"/>
</dbReference>
<dbReference type="GO" id="GO:0000287">
    <property type="term" value="F:magnesium ion binding"/>
    <property type="evidence" value="ECO:0007669"/>
    <property type="project" value="UniProtKB-UniRule"/>
</dbReference>
<dbReference type="GO" id="GO:0004826">
    <property type="term" value="F:phenylalanine-tRNA ligase activity"/>
    <property type="evidence" value="ECO:0007669"/>
    <property type="project" value="UniProtKB-UniRule"/>
</dbReference>
<dbReference type="GO" id="GO:0000049">
    <property type="term" value="F:tRNA binding"/>
    <property type="evidence" value="ECO:0007669"/>
    <property type="project" value="InterPro"/>
</dbReference>
<dbReference type="GO" id="GO:0006432">
    <property type="term" value="P:phenylalanyl-tRNA aminoacylation"/>
    <property type="evidence" value="ECO:0007669"/>
    <property type="project" value="UniProtKB-UniRule"/>
</dbReference>
<dbReference type="CDD" id="cd00496">
    <property type="entry name" value="PheRS_alpha_core"/>
    <property type="match status" value="1"/>
</dbReference>
<dbReference type="Gene3D" id="3.30.930.10">
    <property type="entry name" value="Bira Bifunctional Protein, Domain 2"/>
    <property type="match status" value="1"/>
</dbReference>
<dbReference type="HAMAP" id="MF_00281">
    <property type="entry name" value="Phe_tRNA_synth_alpha1"/>
    <property type="match status" value="1"/>
</dbReference>
<dbReference type="InterPro" id="IPR006195">
    <property type="entry name" value="aa-tRNA-synth_II"/>
</dbReference>
<dbReference type="InterPro" id="IPR045864">
    <property type="entry name" value="aa-tRNA-synth_II/BPL/LPL"/>
</dbReference>
<dbReference type="InterPro" id="IPR004188">
    <property type="entry name" value="Phe-tRNA_ligase_II_N"/>
</dbReference>
<dbReference type="InterPro" id="IPR022911">
    <property type="entry name" value="Phe_tRNA_ligase_alpha1_bac"/>
</dbReference>
<dbReference type="InterPro" id="IPR002319">
    <property type="entry name" value="Phenylalanyl-tRNA_Synthase"/>
</dbReference>
<dbReference type="InterPro" id="IPR010978">
    <property type="entry name" value="tRNA-bd_arm"/>
</dbReference>
<dbReference type="PANTHER" id="PTHR11538:SF41">
    <property type="entry name" value="PHENYLALANINE--TRNA LIGASE, MITOCHONDRIAL"/>
    <property type="match status" value="1"/>
</dbReference>
<dbReference type="PANTHER" id="PTHR11538">
    <property type="entry name" value="PHENYLALANYL-TRNA SYNTHETASE"/>
    <property type="match status" value="1"/>
</dbReference>
<dbReference type="Pfam" id="PF02912">
    <property type="entry name" value="Phe_tRNA-synt_N"/>
    <property type="match status" value="1"/>
</dbReference>
<dbReference type="Pfam" id="PF01409">
    <property type="entry name" value="tRNA-synt_2d"/>
    <property type="match status" value="1"/>
</dbReference>
<dbReference type="SUPFAM" id="SSF55681">
    <property type="entry name" value="Class II aaRS and biotin synthetases"/>
    <property type="match status" value="1"/>
</dbReference>
<dbReference type="SUPFAM" id="SSF46589">
    <property type="entry name" value="tRNA-binding arm"/>
    <property type="match status" value="1"/>
</dbReference>
<dbReference type="PROSITE" id="PS50862">
    <property type="entry name" value="AA_TRNA_LIGASE_II"/>
    <property type="match status" value="1"/>
</dbReference>
<keyword id="KW-0030">Aminoacyl-tRNA synthetase</keyword>
<keyword id="KW-0067">ATP-binding</keyword>
<keyword id="KW-0963">Cytoplasm</keyword>
<keyword id="KW-0436">Ligase</keyword>
<keyword id="KW-0460">Magnesium</keyword>
<keyword id="KW-0479">Metal-binding</keyword>
<keyword id="KW-0547">Nucleotide-binding</keyword>
<keyword id="KW-0648">Protein biosynthesis</keyword>
<comment type="catalytic activity">
    <reaction>
        <text>tRNA(Phe) + L-phenylalanine + ATP = L-phenylalanyl-tRNA(Phe) + AMP + diphosphate + H(+)</text>
        <dbReference type="Rhea" id="RHEA:19413"/>
        <dbReference type="Rhea" id="RHEA-COMP:9668"/>
        <dbReference type="Rhea" id="RHEA-COMP:9699"/>
        <dbReference type="ChEBI" id="CHEBI:15378"/>
        <dbReference type="ChEBI" id="CHEBI:30616"/>
        <dbReference type="ChEBI" id="CHEBI:33019"/>
        <dbReference type="ChEBI" id="CHEBI:58095"/>
        <dbReference type="ChEBI" id="CHEBI:78442"/>
        <dbReference type="ChEBI" id="CHEBI:78531"/>
        <dbReference type="ChEBI" id="CHEBI:456215"/>
        <dbReference type="EC" id="6.1.1.20"/>
    </reaction>
</comment>
<comment type="cofactor">
    <cofactor evidence="1">
        <name>Mg(2+)</name>
        <dbReference type="ChEBI" id="CHEBI:18420"/>
    </cofactor>
    <text evidence="1">Binds 2 magnesium ions per tetramer.</text>
</comment>
<comment type="subunit">
    <text evidence="1">Tetramer of two alpha and two beta subunits.</text>
</comment>
<comment type="subcellular location">
    <subcellularLocation>
        <location evidence="1">Cytoplasm</location>
    </subcellularLocation>
</comment>
<comment type="similarity">
    <text evidence="2">Belongs to the class-II aminoacyl-tRNA synthetase family. Phe-tRNA synthetase alpha subunit type 1 subfamily.</text>
</comment>
<proteinExistence type="inferred from homology"/>
<organism>
    <name type="scientific">Chlamydia pneumoniae</name>
    <name type="common">Chlamydophila pneumoniae</name>
    <dbReference type="NCBI Taxonomy" id="83558"/>
    <lineage>
        <taxon>Bacteria</taxon>
        <taxon>Pseudomonadati</taxon>
        <taxon>Chlamydiota</taxon>
        <taxon>Chlamydiia</taxon>
        <taxon>Chlamydiales</taxon>
        <taxon>Chlamydiaceae</taxon>
        <taxon>Chlamydia/Chlamydophila group</taxon>
        <taxon>Chlamydia</taxon>
    </lineage>
</organism>
<sequence length="339" mass="38367">MEMKEEIEAVKQQFHSELDQVNSSQALADLKVRYLGKKGIFRSFSEKLKQCTDKAKLGSLINDFKTYVEDLLQEKSLVLLASEQAEAFSKEKIDSSLPGDSQPSGGRHILKSILDDVVDIFVHLGFCVREAPNIESEANNFTLLNFTEDHPARQMHDTFYLNATTVLRTHTSNVQARELKKQQPPIKVVAPGLCFRNEDISARSHVLFHQVEAFYVDHNVTFSDLTAILSAFYHSFFQRKTELRFRHSYFPFVEPGIEVDVSCECCGKGCALCKHTGWLEVAGAGMIHPQVLRNGNVDPEIYSGYAVGMGIERLAMLKYGVSDIRLFSENDLRFLQQFS</sequence>
<accession>Q9Z6R6</accession>
<name>SYFA_CHLPN</name>